<reference key="1">
    <citation type="submission" date="2004-03" db="EMBL/GenBank/DDBJ databases">
        <authorList>
            <consortium name="NIH - Xenopus Gene Collection (XGC) project"/>
        </authorList>
    </citation>
    <scope>NUCLEOTIDE SEQUENCE [LARGE SCALE MRNA]</scope>
    <source>
        <tissue>Embryo</tissue>
    </source>
</reference>
<accession>Q6NVR9</accession>
<name>ATAD3_XENTR</name>
<keyword id="KW-0067">ATP-binding</keyword>
<keyword id="KW-0175">Coiled coil</keyword>
<keyword id="KW-0472">Membrane</keyword>
<keyword id="KW-0496">Mitochondrion</keyword>
<keyword id="KW-0999">Mitochondrion inner membrane</keyword>
<keyword id="KW-1135">Mitochondrion nucleoid</keyword>
<keyword id="KW-0547">Nucleotide-binding</keyword>
<keyword id="KW-1185">Reference proteome</keyword>
<keyword id="KW-0812">Transmembrane</keyword>
<keyword id="KW-1133">Transmembrane helix</keyword>
<proteinExistence type="evidence at transcript level"/>
<protein>
    <recommendedName>
        <fullName>ATPase family AAA domain-containing protein 3</fullName>
    </recommendedName>
</protein>
<sequence>MSWLFGLNKGQQGPPSVPGFPEPPSPPGGSGDGGDKNKPKDKWSNFDPTGLERAAKAARELDQSRHAKEALNLAKVQEETLQLEQQSKIKEYEAAVEQLKNEQIRVQAEERRKTLNEETKQHQARAQYQDKLARQRYEDQLRQQQLQNEENLRRQEESVQKQEAMRKATVEHEMELRHKNEMLRIEAEARARAKVERENADIIRENIRLKAAEHRQTVLESIKTAGTVFGEGFRAFISDWDKVTATVAGLSLLAVGIYTAKNATGVAGRYIEARLGKPSLVRDTSRFTVAEAVKHPVKISKRLLSKIQDALEGVILSPKLEERVRDIAIATRNTKANKGLYRNILMYGPPGTGKTLFAKKLAMHSGMDYAIMTGGDVAPMGREGVTAMHKVFDWAGTSKRGLLLFVDEADAFLRKRSTEKISEDLRATLNAFLYRTGEQSNKFMLVLASNQPEQFDWAINDRIDEIVHFDLPGLEERERLVRLYFDKYVLQPASEGKQRLKVAQFDYGKKCSDLAQLTEGMSGREISKLGVAWQAAAYASEDGILNEAMIDARVADAIRQHQQKMEWLKAEGKENAAKESGKNPLQPLLEGTPV</sequence>
<dbReference type="EMBL" id="BC067935">
    <property type="protein sequence ID" value="AAH67935.1"/>
    <property type="molecule type" value="mRNA"/>
</dbReference>
<dbReference type="RefSeq" id="NP_998849.1">
    <property type="nucleotide sequence ID" value="NM_213684.1"/>
</dbReference>
<dbReference type="SMR" id="Q6NVR9"/>
<dbReference type="FunCoup" id="Q6NVR9">
    <property type="interactions" value="2893"/>
</dbReference>
<dbReference type="STRING" id="8364.ENSXETP00000007609"/>
<dbReference type="PaxDb" id="8364-ENSXETP00000028394"/>
<dbReference type="DNASU" id="407895"/>
<dbReference type="GeneID" id="407895"/>
<dbReference type="KEGG" id="xtr:407895"/>
<dbReference type="AGR" id="Xenbase:XB-GENE-946129"/>
<dbReference type="CTD" id="55210"/>
<dbReference type="Xenbase" id="XB-GENE-946129">
    <property type="gene designation" value="atad3a"/>
</dbReference>
<dbReference type="eggNOG" id="KOG0742">
    <property type="taxonomic scope" value="Eukaryota"/>
</dbReference>
<dbReference type="HOGENOM" id="CLU_011488_2_0_1"/>
<dbReference type="InParanoid" id="Q6NVR9"/>
<dbReference type="OMA" id="HKSITGG"/>
<dbReference type="OrthoDB" id="199596at2759"/>
<dbReference type="PhylomeDB" id="Q6NVR9"/>
<dbReference type="TreeFam" id="TF313922"/>
<dbReference type="Reactome" id="R-XTR-6798695">
    <property type="pathway name" value="Neutrophil degranulation"/>
</dbReference>
<dbReference type="Proteomes" id="UP000008143">
    <property type="component" value="Chromosome 7"/>
</dbReference>
<dbReference type="Bgee" id="ENSXETG00000012959">
    <property type="expression patterns" value="Expressed in ovary and 14 other cell types or tissues"/>
</dbReference>
<dbReference type="ExpressionAtlas" id="Q6NVR9">
    <property type="expression patterns" value="baseline"/>
</dbReference>
<dbReference type="GO" id="GO:0005743">
    <property type="term" value="C:mitochondrial inner membrane"/>
    <property type="evidence" value="ECO:0007669"/>
    <property type="project" value="UniProtKB-SubCell"/>
</dbReference>
<dbReference type="GO" id="GO:0042645">
    <property type="term" value="C:mitochondrial nucleoid"/>
    <property type="evidence" value="ECO:0007669"/>
    <property type="project" value="UniProtKB-SubCell"/>
</dbReference>
<dbReference type="GO" id="GO:0005524">
    <property type="term" value="F:ATP binding"/>
    <property type="evidence" value="ECO:0007669"/>
    <property type="project" value="UniProtKB-KW"/>
</dbReference>
<dbReference type="GO" id="GO:0016887">
    <property type="term" value="F:ATP hydrolysis activity"/>
    <property type="evidence" value="ECO:0007669"/>
    <property type="project" value="InterPro"/>
</dbReference>
<dbReference type="CDD" id="cd19512">
    <property type="entry name" value="RecA-like_ATAD3-like"/>
    <property type="match status" value="1"/>
</dbReference>
<dbReference type="FunFam" id="3.40.50.300:FF:000470">
    <property type="entry name" value="ATPase family, AAA domain containing 3A"/>
    <property type="match status" value="1"/>
</dbReference>
<dbReference type="Gene3D" id="3.40.50.300">
    <property type="entry name" value="P-loop containing nucleotide triphosphate hydrolases"/>
    <property type="match status" value="1"/>
</dbReference>
<dbReference type="InterPro" id="IPR003593">
    <property type="entry name" value="AAA+_ATPase"/>
</dbReference>
<dbReference type="InterPro" id="IPR021911">
    <property type="entry name" value="ATAD3_N"/>
</dbReference>
<dbReference type="InterPro" id="IPR003959">
    <property type="entry name" value="ATPase_AAA_core"/>
</dbReference>
<dbReference type="InterPro" id="IPR027417">
    <property type="entry name" value="P-loop_NTPase"/>
</dbReference>
<dbReference type="PANTHER" id="PTHR23075:SF0">
    <property type="entry name" value="ATPASE FAMILY AAA DOMAIN-CONTAINING PROTEIN 3"/>
    <property type="match status" value="1"/>
</dbReference>
<dbReference type="PANTHER" id="PTHR23075">
    <property type="entry name" value="PUTATIVE ATP-ASE"/>
    <property type="match status" value="1"/>
</dbReference>
<dbReference type="Pfam" id="PF00004">
    <property type="entry name" value="AAA"/>
    <property type="match status" value="1"/>
</dbReference>
<dbReference type="Pfam" id="PF12037">
    <property type="entry name" value="ATAD3_N"/>
    <property type="match status" value="1"/>
</dbReference>
<dbReference type="SMART" id="SM00382">
    <property type="entry name" value="AAA"/>
    <property type="match status" value="1"/>
</dbReference>
<dbReference type="SUPFAM" id="SSF52540">
    <property type="entry name" value="P-loop containing nucleoside triphosphate hydrolases"/>
    <property type="match status" value="1"/>
</dbReference>
<gene>
    <name type="primary">atad3</name>
</gene>
<comment type="function">
    <text evidence="1">Essential for mitochondrial network organization, mitochondrial metabolism and cell growth at organism and cellular level. May play an important role in mitochondrial protein synthesis. May also participate in mitochondrial DNA replication. May bind to mitochondrial DNA D-loops and contribute to nucleoid stability. Required for enhanced channeling of cholesterol for hormone-dependent steroidogenesis (By similarity).</text>
</comment>
<comment type="subcellular location">
    <subcellularLocation>
        <location evidence="1">Mitochondrion inner membrane</location>
        <topology evidence="1">Single-pass membrane protein</topology>
    </subcellularLocation>
    <subcellularLocation>
        <location evidence="1">Mitochondrion matrix</location>
        <location evidence="1">Mitochondrion nucleoid</location>
    </subcellularLocation>
    <text evidence="1">In the mitochondrial inner membrane, enriched in sites with the potential to form contacts with the outer membrane. The N-terminal domain interacts with the inner surface of the mitochondrial outer membrane and the C-terminal domain localizes in a specific matrix compartment, where it is associated with nucleoids (By similarity).</text>
</comment>
<comment type="similarity">
    <text evidence="4">Belongs to the AAA ATPase family.</text>
</comment>
<evidence type="ECO:0000250" key="1"/>
<evidence type="ECO:0000255" key="2"/>
<evidence type="ECO:0000256" key="3">
    <source>
        <dbReference type="SAM" id="MobiDB-lite"/>
    </source>
</evidence>
<evidence type="ECO:0000305" key="4"/>
<organism>
    <name type="scientific">Xenopus tropicalis</name>
    <name type="common">Western clawed frog</name>
    <name type="synonym">Silurana tropicalis</name>
    <dbReference type="NCBI Taxonomy" id="8364"/>
    <lineage>
        <taxon>Eukaryota</taxon>
        <taxon>Metazoa</taxon>
        <taxon>Chordata</taxon>
        <taxon>Craniata</taxon>
        <taxon>Vertebrata</taxon>
        <taxon>Euteleostomi</taxon>
        <taxon>Amphibia</taxon>
        <taxon>Batrachia</taxon>
        <taxon>Anura</taxon>
        <taxon>Pipoidea</taxon>
        <taxon>Pipidae</taxon>
        <taxon>Xenopodinae</taxon>
        <taxon>Xenopus</taxon>
        <taxon>Silurana</taxon>
    </lineage>
</organism>
<feature type="chain" id="PRO_0000311984" description="ATPase family AAA domain-containing protein 3">
    <location>
        <begin position="1"/>
        <end position="594"/>
    </location>
</feature>
<feature type="topological domain" description="Mitochondrial intermembrane" evidence="2">
    <location>
        <begin position="1"/>
        <end position="242"/>
    </location>
</feature>
<feature type="transmembrane region" description="Helical" evidence="2">
    <location>
        <begin position="243"/>
        <end position="260"/>
    </location>
</feature>
<feature type="topological domain" description="Mitochondrial matrix" evidence="2">
    <location>
        <begin position="261"/>
        <end position="594"/>
    </location>
</feature>
<feature type="region of interest" description="Disordered" evidence="3">
    <location>
        <begin position="1"/>
        <end position="50"/>
    </location>
</feature>
<feature type="region of interest" description="Disordered" evidence="3">
    <location>
        <begin position="571"/>
        <end position="594"/>
    </location>
</feature>
<feature type="coiled-coil region" evidence="2">
    <location>
        <begin position="51"/>
        <end position="213"/>
    </location>
</feature>
<feature type="compositionally biased region" description="Pro residues" evidence="3">
    <location>
        <begin position="15"/>
        <end position="27"/>
    </location>
</feature>
<feature type="compositionally biased region" description="Basic and acidic residues" evidence="3">
    <location>
        <begin position="33"/>
        <end position="44"/>
    </location>
</feature>
<feature type="compositionally biased region" description="Basic and acidic residues" evidence="3">
    <location>
        <begin position="571"/>
        <end position="581"/>
    </location>
</feature>
<feature type="binding site" evidence="2">
    <location>
        <begin position="348"/>
        <end position="355"/>
    </location>
    <ligand>
        <name>ATP</name>
        <dbReference type="ChEBI" id="CHEBI:30616"/>
    </ligand>
</feature>